<organism>
    <name type="scientific">Shewanella amazonensis (strain ATCC BAA-1098 / SB2B)</name>
    <dbReference type="NCBI Taxonomy" id="326297"/>
    <lineage>
        <taxon>Bacteria</taxon>
        <taxon>Pseudomonadati</taxon>
        <taxon>Pseudomonadota</taxon>
        <taxon>Gammaproteobacteria</taxon>
        <taxon>Alteromonadales</taxon>
        <taxon>Shewanellaceae</taxon>
        <taxon>Shewanella</taxon>
    </lineage>
</organism>
<gene>
    <name evidence="1" type="primary">murC</name>
    <name type="ordered locus">Sama_0355</name>
</gene>
<protein>
    <recommendedName>
        <fullName evidence="1">UDP-N-acetylmuramate--L-alanine ligase</fullName>
        <ecNumber evidence="1">6.3.2.8</ecNumber>
    </recommendedName>
    <alternativeName>
        <fullName evidence="1">UDP-N-acetylmuramoyl-L-alanine synthetase</fullName>
    </alternativeName>
</protein>
<sequence length="484" mass="52706">MTQTEKYRQLRTMIPEMRRVRRIHFVGIGGAGMGGIAEVLVNEGYQVSGSDIADNAVTERLGSLGARIFIGHGADNVSGVDVVVVSTAIKHDNPEIAAAKEKRIPIVRRAEMLAELMRYRHGVAVAGTHGKTTTTSLIASIYGQAERDPTFVIGGLLNSAGTNARLGSSRYLIAEADESDASFLHLQPMVTVVTNIEADHMDTYGGDFEKLKSTFVDFMHNLPFYGVAVVCVDDPVVRELIPRIGRQVVTYGFSDDADVQALNFVQEGHSCRFTVRRKGKDDLSLKVNLPGQHNVLNSLAAIAVATEDDIEDEAIVKALAEFQGIGRRFQHLGKFATPNGEVMLVDDYGHHPSEVLATIKAARAGWPDKRLVMAYQPHRYTRTRDLYEDFVEVLSQVDKLVLLEVYAAGETPIPGADGRALCRSIRQRGQLEPIFVASPEQLTSVLPDVLADGDLLLCQGAGNIGALSRELAATELGFAKVENN</sequence>
<proteinExistence type="inferred from homology"/>
<keyword id="KW-0067">ATP-binding</keyword>
<keyword id="KW-0131">Cell cycle</keyword>
<keyword id="KW-0132">Cell division</keyword>
<keyword id="KW-0133">Cell shape</keyword>
<keyword id="KW-0961">Cell wall biogenesis/degradation</keyword>
<keyword id="KW-0963">Cytoplasm</keyword>
<keyword id="KW-0436">Ligase</keyword>
<keyword id="KW-0547">Nucleotide-binding</keyword>
<keyword id="KW-0573">Peptidoglycan synthesis</keyword>
<keyword id="KW-1185">Reference proteome</keyword>
<dbReference type="EC" id="6.3.2.8" evidence="1"/>
<dbReference type="EMBL" id="CP000507">
    <property type="protein sequence ID" value="ABL98566.1"/>
    <property type="molecule type" value="Genomic_DNA"/>
</dbReference>
<dbReference type="RefSeq" id="WP_011758476.1">
    <property type="nucleotide sequence ID" value="NC_008700.1"/>
</dbReference>
<dbReference type="SMR" id="A1S2G0"/>
<dbReference type="STRING" id="326297.Sama_0355"/>
<dbReference type="KEGG" id="saz:Sama_0355"/>
<dbReference type="eggNOG" id="COG0773">
    <property type="taxonomic scope" value="Bacteria"/>
</dbReference>
<dbReference type="HOGENOM" id="CLU_028104_2_2_6"/>
<dbReference type="OrthoDB" id="9804126at2"/>
<dbReference type="UniPathway" id="UPA00219"/>
<dbReference type="Proteomes" id="UP000009175">
    <property type="component" value="Chromosome"/>
</dbReference>
<dbReference type="GO" id="GO:0005737">
    <property type="term" value="C:cytoplasm"/>
    <property type="evidence" value="ECO:0007669"/>
    <property type="project" value="UniProtKB-SubCell"/>
</dbReference>
<dbReference type="GO" id="GO:0005524">
    <property type="term" value="F:ATP binding"/>
    <property type="evidence" value="ECO:0007669"/>
    <property type="project" value="UniProtKB-UniRule"/>
</dbReference>
<dbReference type="GO" id="GO:0008763">
    <property type="term" value="F:UDP-N-acetylmuramate-L-alanine ligase activity"/>
    <property type="evidence" value="ECO:0007669"/>
    <property type="project" value="UniProtKB-UniRule"/>
</dbReference>
<dbReference type="GO" id="GO:0051301">
    <property type="term" value="P:cell division"/>
    <property type="evidence" value="ECO:0007669"/>
    <property type="project" value="UniProtKB-KW"/>
</dbReference>
<dbReference type="GO" id="GO:0071555">
    <property type="term" value="P:cell wall organization"/>
    <property type="evidence" value="ECO:0007669"/>
    <property type="project" value="UniProtKB-KW"/>
</dbReference>
<dbReference type="GO" id="GO:0009252">
    <property type="term" value="P:peptidoglycan biosynthetic process"/>
    <property type="evidence" value="ECO:0007669"/>
    <property type="project" value="UniProtKB-UniRule"/>
</dbReference>
<dbReference type="GO" id="GO:0008360">
    <property type="term" value="P:regulation of cell shape"/>
    <property type="evidence" value="ECO:0007669"/>
    <property type="project" value="UniProtKB-KW"/>
</dbReference>
<dbReference type="FunFam" id="3.40.1190.10:FF:000001">
    <property type="entry name" value="UDP-N-acetylmuramate--L-alanine ligase"/>
    <property type="match status" value="1"/>
</dbReference>
<dbReference type="FunFam" id="3.40.50.720:FF:000046">
    <property type="entry name" value="UDP-N-acetylmuramate--L-alanine ligase"/>
    <property type="match status" value="1"/>
</dbReference>
<dbReference type="Gene3D" id="3.90.190.20">
    <property type="entry name" value="Mur ligase, C-terminal domain"/>
    <property type="match status" value="1"/>
</dbReference>
<dbReference type="Gene3D" id="3.40.1190.10">
    <property type="entry name" value="Mur-like, catalytic domain"/>
    <property type="match status" value="1"/>
</dbReference>
<dbReference type="Gene3D" id="3.40.50.720">
    <property type="entry name" value="NAD(P)-binding Rossmann-like Domain"/>
    <property type="match status" value="1"/>
</dbReference>
<dbReference type="HAMAP" id="MF_00046">
    <property type="entry name" value="MurC"/>
    <property type="match status" value="1"/>
</dbReference>
<dbReference type="InterPro" id="IPR036565">
    <property type="entry name" value="Mur-like_cat_sf"/>
</dbReference>
<dbReference type="InterPro" id="IPR004101">
    <property type="entry name" value="Mur_ligase_C"/>
</dbReference>
<dbReference type="InterPro" id="IPR036615">
    <property type="entry name" value="Mur_ligase_C_dom_sf"/>
</dbReference>
<dbReference type="InterPro" id="IPR013221">
    <property type="entry name" value="Mur_ligase_cen"/>
</dbReference>
<dbReference type="InterPro" id="IPR000713">
    <property type="entry name" value="Mur_ligase_N"/>
</dbReference>
<dbReference type="InterPro" id="IPR050061">
    <property type="entry name" value="MurCDEF_pg_biosynth"/>
</dbReference>
<dbReference type="InterPro" id="IPR005758">
    <property type="entry name" value="UDP-N-AcMur_Ala_ligase_MurC"/>
</dbReference>
<dbReference type="NCBIfam" id="TIGR01082">
    <property type="entry name" value="murC"/>
    <property type="match status" value="1"/>
</dbReference>
<dbReference type="PANTHER" id="PTHR43445:SF3">
    <property type="entry name" value="UDP-N-ACETYLMURAMATE--L-ALANINE LIGASE"/>
    <property type="match status" value="1"/>
</dbReference>
<dbReference type="PANTHER" id="PTHR43445">
    <property type="entry name" value="UDP-N-ACETYLMURAMATE--L-ALANINE LIGASE-RELATED"/>
    <property type="match status" value="1"/>
</dbReference>
<dbReference type="Pfam" id="PF01225">
    <property type="entry name" value="Mur_ligase"/>
    <property type="match status" value="1"/>
</dbReference>
<dbReference type="Pfam" id="PF02875">
    <property type="entry name" value="Mur_ligase_C"/>
    <property type="match status" value="1"/>
</dbReference>
<dbReference type="Pfam" id="PF08245">
    <property type="entry name" value="Mur_ligase_M"/>
    <property type="match status" value="1"/>
</dbReference>
<dbReference type="SUPFAM" id="SSF51984">
    <property type="entry name" value="MurCD N-terminal domain"/>
    <property type="match status" value="1"/>
</dbReference>
<dbReference type="SUPFAM" id="SSF53623">
    <property type="entry name" value="MurD-like peptide ligases, catalytic domain"/>
    <property type="match status" value="1"/>
</dbReference>
<dbReference type="SUPFAM" id="SSF53244">
    <property type="entry name" value="MurD-like peptide ligases, peptide-binding domain"/>
    <property type="match status" value="1"/>
</dbReference>
<feature type="chain" id="PRO_1000004402" description="UDP-N-acetylmuramate--L-alanine ligase">
    <location>
        <begin position="1"/>
        <end position="484"/>
    </location>
</feature>
<feature type="binding site" evidence="1">
    <location>
        <begin position="127"/>
        <end position="133"/>
    </location>
    <ligand>
        <name>ATP</name>
        <dbReference type="ChEBI" id="CHEBI:30616"/>
    </ligand>
</feature>
<name>MURC_SHEAM</name>
<evidence type="ECO:0000255" key="1">
    <source>
        <dbReference type="HAMAP-Rule" id="MF_00046"/>
    </source>
</evidence>
<reference key="1">
    <citation type="submission" date="2006-12" db="EMBL/GenBank/DDBJ databases">
        <title>Complete sequence of Shewanella amazonensis SB2B.</title>
        <authorList>
            <consortium name="US DOE Joint Genome Institute"/>
            <person name="Copeland A."/>
            <person name="Lucas S."/>
            <person name="Lapidus A."/>
            <person name="Barry K."/>
            <person name="Detter J.C."/>
            <person name="Glavina del Rio T."/>
            <person name="Hammon N."/>
            <person name="Israni S."/>
            <person name="Dalin E."/>
            <person name="Tice H."/>
            <person name="Pitluck S."/>
            <person name="Munk A.C."/>
            <person name="Brettin T."/>
            <person name="Bruce D."/>
            <person name="Han C."/>
            <person name="Tapia R."/>
            <person name="Gilna P."/>
            <person name="Schmutz J."/>
            <person name="Larimer F."/>
            <person name="Land M."/>
            <person name="Hauser L."/>
            <person name="Kyrpides N."/>
            <person name="Mikhailova N."/>
            <person name="Fredrickson J."/>
            <person name="Richardson P."/>
        </authorList>
    </citation>
    <scope>NUCLEOTIDE SEQUENCE [LARGE SCALE GENOMIC DNA]</scope>
    <source>
        <strain>ATCC BAA-1098 / SB2B</strain>
    </source>
</reference>
<comment type="function">
    <text evidence="1">Cell wall formation.</text>
</comment>
<comment type="catalytic activity">
    <reaction evidence="1">
        <text>UDP-N-acetyl-alpha-D-muramate + L-alanine + ATP = UDP-N-acetyl-alpha-D-muramoyl-L-alanine + ADP + phosphate + H(+)</text>
        <dbReference type="Rhea" id="RHEA:23372"/>
        <dbReference type="ChEBI" id="CHEBI:15378"/>
        <dbReference type="ChEBI" id="CHEBI:30616"/>
        <dbReference type="ChEBI" id="CHEBI:43474"/>
        <dbReference type="ChEBI" id="CHEBI:57972"/>
        <dbReference type="ChEBI" id="CHEBI:70757"/>
        <dbReference type="ChEBI" id="CHEBI:83898"/>
        <dbReference type="ChEBI" id="CHEBI:456216"/>
        <dbReference type="EC" id="6.3.2.8"/>
    </reaction>
</comment>
<comment type="pathway">
    <text evidence="1">Cell wall biogenesis; peptidoglycan biosynthesis.</text>
</comment>
<comment type="subcellular location">
    <subcellularLocation>
        <location evidence="1">Cytoplasm</location>
    </subcellularLocation>
</comment>
<comment type="similarity">
    <text evidence="1">Belongs to the MurCDEF family.</text>
</comment>
<accession>A1S2G0</accession>